<keyword id="KW-0963">Cytoplasm</keyword>
<keyword id="KW-0233">DNA recombination</keyword>
<feature type="chain" id="PRO_1000099057" description="Recombination-associated protein RdgC">
    <location>
        <begin position="1"/>
        <end position="307"/>
    </location>
</feature>
<comment type="function">
    <text evidence="1">May be involved in recombination.</text>
</comment>
<comment type="subcellular location">
    <subcellularLocation>
        <location evidence="1">Cytoplasm</location>
        <location evidence="1">Nucleoid</location>
    </subcellularLocation>
</comment>
<comment type="similarity">
    <text evidence="1">Belongs to the RdgC family.</text>
</comment>
<sequence length="307" mass="34013">MWFKNLQLHRLPAPWAVTADRMEKWLAPHAFQPGSSVEMQRVGWASPRDDGALVYSINRQMLLVFRAEKKLLPASVVNQVTKARALELEEQQGFKVGRKQLRELKEQVTDELLPRAFSIRRDTRVWIDTANGWLVIDAAAQALADDVRSLLVKSIDGLPLAGVQVARSPVAAMTDWLLSGDAPGGFTVDQDAELRSSGEGGATVRYVGHALEANDMRRHIEAGKQCMRLAMTWDDRISFVLTPSLTIKRVTPLDVIKEAADPTAQNDDERFDSDFTLMTGELARMLTSLVDILGGDRQDSVPQPAAA</sequence>
<organism>
    <name type="scientific">Burkholderia cenocepacia (strain ATCC BAA-245 / DSM 16553 / LMG 16656 / NCTC 13227 / J2315 / CF5610)</name>
    <name type="common">Burkholderia cepacia (strain J2315)</name>
    <dbReference type="NCBI Taxonomy" id="216591"/>
    <lineage>
        <taxon>Bacteria</taxon>
        <taxon>Pseudomonadati</taxon>
        <taxon>Pseudomonadota</taxon>
        <taxon>Betaproteobacteria</taxon>
        <taxon>Burkholderiales</taxon>
        <taxon>Burkholderiaceae</taxon>
        <taxon>Burkholderia</taxon>
        <taxon>Burkholderia cepacia complex</taxon>
    </lineage>
</organism>
<evidence type="ECO:0000255" key="1">
    <source>
        <dbReference type="HAMAP-Rule" id="MF_00194"/>
    </source>
</evidence>
<accession>B4EK21</accession>
<name>RDGC_BURCJ</name>
<dbReference type="EMBL" id="AM747721">
    <property type="protein sequence ID" value="CAR55414.1"/>
    <property type="molecule type" value="Genomic_DNA"/>
</dbReference>
<dbReference type="RefSeq" id="WP_012493343.1">
    <property type="nucleotide sequence ID" value="NC_011001.1"/>
</dbReference>
<dbReference type="SMR" id="B4EK21"/>
<dbReference type="KEGG" id="bcj:BCAM1558"/>
<dbReference type="eggNOG" id="COG2974">
    <property type="taxonomic scope" value="Bacteria"/>
</dbReference>
<dbReference type="HOGENOM" id="CLU_052038_0_1_4"/>
<dbReference type="BioCyc" id="BCEN216591:G1G1V-5578-MONOMER"/>
<dbReference type="Proteomes" id="UP000001035">
    <property type="component" value="Chromosome 2"/>
</dbReference>
<dbReference type="GO" id="GO:0043590">
    <property type="term" value="C:bacterial nucleoid"/>
    <property type="evidence" value="ECO:0007669"/>
    <property type="project" value="TreeGrafter"/>
</dbReference>
<dbReference type="GO" id="GO:0005737">
    <property type="term" value="C:cytoplasm"/>
    <property type="evidence" value="ECO:0007669"/>
    <property type="project" value="UniProtKB-UniRule"/>
</dbReference>
<dbReference type="GO" id="GO:0003690">
    <property type="term" value="F:double-stranded DNA binding"/>
    <property type="evidence" value="ECO:0007669"/>
    <property type="project" value="TreeGrafter"/>
</dbReference>
<dbReference type="GO" id="GO:0006310">
    <property type="term" value="P:DNA recombination"/>
    <property type="evidence" value="ECO:0007669"/>
    <property type="project" value="UniProtKB-UniRule"/>
</dbReference>
<dbReference type="GO" id="GO:0000018">
    <property type="term" value="P:regulation of DNA recombination"/>
    <property type="evidence" value="ECO:0007669"/>
    <property type="project" value="TreeGrafter"/>
</dbReference>
<dbReference type="HAMAP" id="MF_00194">
    <property type="entry name" value="RdgC"/>
    <property type="match status" value="1"/>
</dbReference>
<dbReference type="InterPro" id="IPR007476">
    <property type="entry name" value="RdgC"/>
</dbReference>
<dbReference type="NCBIfam" id="NF001463">
    <property type="entry name" value="PRK00321.1-4"/>
    <property type="match status" value="1"/>
</dbReference>
<dbReference type="NCBIfam" id="NF001464">
    <property type="entry name" value="PRK00321.1-5"/>
    <property type="match status" value="1"/>
</dbReference>
<dbReference type="PANTHER" id="PTHR38103">
    <property type="entry name" value="RECOMBINATION-ASSOCIATED PROTEIN RDGC"/>
    <property type="match status" value="1"/>
</dbReference>
<dbReference type="PANTHER" id="PTHR38103:SF1">
    <property type="entry name" value="RECOMBINATION-ASSOCIATED PROTEIN RDGC"/>
    <property type="match status" value="1"/>
</dbReference>
<dbReference type="Pfam" id="PF04381">
    <property type="entry name" value="RdgC"/>
    <property type="match status" value="1"/>
</dbReference>
<reference key="1">
    <citation type="journal article" date="2009" name="J. Bacteriol.">
        <title>The genome of Burkholderia cenocepacia J2315, an epidemic pathogen of cystic fibrosis patients.</title>
        <authorList>
            <person name="Holden M.T."/>
            <person name="Seth-Smith H.M."/>
            <person name="Crossman L.C."/>
            <person name="Sebaihia M."/>
            <person name="Bentley S.D."/>
            <person name="Cerdeno-Tarraga A.M."/>
            <person name="Thomson N.R."/>
            <person name="Bason N."/>
            <person name="Quail M.A."/>
            <person name="Sharp S."/>
            <person name="Cherevach I."/>
            <person name="Churcher C."/>
            <person name="Goodhead I."/>
            <person name="Hauser H."/>
            <person name="Holroyd N."/>
            <person name="Mungall K."/>
            <person name="Scott P."/>
            <person name="Walker D."/>
            <person name="White B."/>
            <person name="Rose H."/>
            <person name="Iversen P."/>
            <person name="Mil-Homens D."/>
            <person name="Rocha E.P."/>
            <person name="Fialho A.M."/>
            <person name="Baldwin A."/>
            <person name="Dowson C."/>
            <person name="Barrell B.G."/>
            <person name="Govan J.R."/>
            <person name="Vandamme P."/>
            <person name="Hart C.A."/>
            <person name="Mahenthiralingam E."/>
            <person name="Parkhill J."/>
        </authorList>
    </citation>
    <scope>NUCLEOTIDE SEQUENCE [LARGE SCALE GENOMIC DNA]</scope>
    <source>
        <strain>ATCC BAA-245 / DSM 16553 / LMG 16656 / NCTC 13227 / J2315 / CF5610</strain>
    </source>
</reference>
<protein>
    <recommendedName>
        <fullName evidence="1">Recombination-associated protein RdgC</fullName>
    </recommendedName>
</protein>
<proteinExistence type="inferred from homology"/>
<gene>
    <name evidence="1" type="primary">rdgC</name>
    <name type="ordered locus">BceJ2315_50070</name>
    <name type="ORF">BCAM1558</name>
</gene>